<feature type="chain" id="PRO_1000064327" description="L-carnitine/gamma-butyrobetaine antiporter">
    <location>
        <begin position="1"/>
        <end position="505"/>
    </location>
</feature>
<feature type="transmembrane region" description="Helical" evidence="1">
    <location>
        <begin position="10"/>
        <end position="30"/>
    </location>
</feature>
<feature type="transmembrane region" description="Helical" evidence="1">
    <location>
        <begin position="50"/>
        <end position="70"/>
    </location>
</feature>
<feature type="transmembrane region" description="Helical" evidence="1">
    <location>
        <begin position="92"/>
        <end position="112"/>
    </location>
</feature>
<feature type="transmembrane region" description="Helical" evidence="1">
    <location>
        <begin position="143"/>
        <end position="163"/>
    </location>
</feature>
<feature type="transmembrane region" description="Helical" evidence="1">
    <location>
        <begin position="195"/>
        <end position="215"/>
    </location>
</feature>
<feature type="transmembrane region" description="Helical" evidence="1">
    <location>
        <begin position="231"/>
        <end position="251"/>
    </location>
</feature>
<feature type="transmembrane region" description="Helical" evidence="1">
    <location>
        <begin position="263"/>
        <end position="283"/>
    </location>
</feature>
<feature type="transmembrane region" description="Helical" evidence="1">
    <location>
        <begin position="316"/>
        <end position="336"/>
    </location>
</feature>
<feature type="transmembrane region" description="Helical" evidence="1">
    <location>
        <begin position="347"/>
        <end position="367"/>
    </location>
</feature>
<feature type="transmembrane region" description="Helical" evidence="1">
    <location>
        <begin position="403"/>
        <end position="423"/>
    </location>
</feature>
<feature type="transmembrane region" description="Helical" evidence="1">
    <location>
        <begin position="446"/>
        <end position="466"/>
    </location>
</feature>
<feature type="transmembrane region" description="Helical" evidence="1">
    <location>
        <begin position="475"/>
        <end position="495"/>
    </location>
</feature>
<reference key="1">
    <citation type="submission" date="2007-08" db="EMBL/GenBank/DDBJ databases">
        <authorList>
            <consortium name="The Citrobacter koseri Genome Sequencing Project"/>
            <person name="McClelland M."/>
            <person name="Sanderson E.K."/>
            <person name="Porwollik S."/>
            <person name="Spieth J."/>
            <person name="Clifton W.S."/>
            <person name="Latreille P."/>
            <person name="Courtney L."/>
            <person name="Wang C."/>
            <person name="Pepin K."/>
            <person name="Bhonagiri V."/>
            <person name="Nash W."/>
            <person name="Johnson M."/>
            <person name="Thiruvilangam P."/>
            <person name="Wilson R."/>
        </authorList>
    </citation>
    <scope>NUCLEOTIDE SEQUENCE [LARGE SCALE GENOMIC DNA]</scope>
    <source>
        <strain>ATCC BAA-895 / CDC 4225-83 / SGSC4696</strain>
    </source>
</reference>
<keyword id="KW-0050">Antiport</keyword>
<keyword id="KW-0997">Cell inner membrane</keyword>
<keyword id="KW-1003">Cell membrane</keyword>
<keyword id="KW-0472">Membrane</keyword>
<keyword id="KW-1185">Reference proteome</keyword>
<keyword id="KW-0812">Transmembrane</keyword>
<keyword id="KW-1133">Transmembrane helix</keyword>
<keyword id="KW-0813">Transport</keyword>
<protein>
    <recommendedName>
        <fullName evidence="1">L-carnitine/gamma-butyrobetaine antiporter</fullName>
    </recommendedName>
</protein>
<accession>A8ALR3</accession>
<name>CAIT_CITK8</name>
<organism>
    <name type="scientific">Citrobacter koseri (strain ATCC BAA-895 / CDC 4225-83 / SGSC4696)</name>
    <dbReference type="NCBI Taxonomy" id="290338"/>
    <lineage>
        <taxon>Bacteria</taxon>
        <taxon>Pseudomonadati</taxon>
        <taxon>Pseudomonadota</taxon>
        <taxon>Gammaproteobacteria</taxon>
        <taxon>Enterobacterales</taxon>
        <taxon>Enterobacteriaceae</taxon>
        <taxon>Citrobacter</taxon>
    </lineage>
</organism>
<sequence>MKNEKRKSGIEPKVFFPPLIIVGILCWLTVRDLDAANIVINAVFSYVTNIWGWAFEWYMVVMLFGWFWLVFGPYAKKRLGDEPPEFSTASWIFMMFASCTSAAVLFWGSIEIYYYISTPPFALAPGSNGAKEIGLAYSLFHWGPLPWATYSFLSVAFAYFFFVRKMDVIRPSSTLVPLVGEKHAKGLFGTIVDNFYLVALIFAMGTSLGLATPLVTECMQYLFGIPHTLELDAIIITCWIVLNAICVACGLQKGVKIASDVRSYLSFLMLGWVFIVSGASFIMNYFTDSVGMLLMYLPRMLFYTDAIGKGGFPQGWTVFYWAWWVIYAIQMSIFLARISRGRTVRELCFGMVLGLTASTWILWTVLGSNTLLLMDKNILNIPQLIEQHGVARAIIETWAALPFSTATMWGFFILCFIATVTLINACSYTLAMSTCREVRDGEEPPLLVRIGWSVLVGVIGIVLLALGGLKPIQTAIIAGGCPLFFVNIMVTLSFIKDAKVHWKDK</sequence>
<gene>
    <name evidence="1" type="primary">caiT</name>
    <name type="ordered locus">CKO_03343</name>
</gene>
<dbReference type="EMBL" id="CP000822">
    <property type="protein sequence ID" value="ABV14426.1"/>
    <property type="molecule type" value="Genomic_DNA"/>
</dbReference>
<dbReference type="RefSeq" id="WP_012134129.1">
    <property type="nucleotide sequence ID" value="NC_009792.1"/>
</dbReference>
<dbReference type="SMR" id="A8ALR3"/>
<dbReference type="STRING" id="290338.CKO_03343"/>
<dbReference type="GeneID" id="45137106"/>
<dbReference type="KEGG" id="cko:CKO_03343"/>
<dbReference type="HOGENOM" id="CLU_010118_6_0_6"/>
<dbReference type="OrthoDB" id="9775735at2"/>
<dbReference type="UniPathway" id="UPA00117"/>
<dbReference type="Proteomes" id="UP000008148">
    <property type="component" value="Chromosome"/>
</dbReference>
<dbReference type="GO" id="GO:0005886">
    <property type="term" value="C:plasma membrane"/>
    <property type="evidence" value="ECO:0007669"/>
    <property type="project" value="UniProtKB-SubCell"/>
</dbReference>
<dbReference type="GO" id="GO:0044667">
    <property type="term" value="F:(R)-carnitine:4-(trimethylammonio)butanoate antiporter activity"/>
    <property type="evidence" value="ECO:0007669"/>
    <property type="project" value="UniProtKB-UniRule"/>
</dbReference>
<dbReference type="GO" id="GO:1900751">
    <property type="term" value="P:4-(trimethylammonio)butanoate transport"/>
    <property type="evidence" value="ECO:0007669"/>
    <property type="project" value="InterPro"/>
</dbReference>
<dbReference type="GO" id="GO:0009437">
    <property type="term" value="P:carnitine metabolic process"/>
    <property type="evidence" value="ECO:0007669"/>
    <property type="project" value="UniProtKB-UniRule"/>
</dbReference>
<dbReference type="HAMAP" id="MF_01049">
    <property type="entry name" value="CaiT"/>
    <property type="match status" value="1"/>
</dbReference>
<dbReference type="InterPro" id="IPR018093">
    <property type="entry name" value="BCCT_CS"/>
</dbReference>
<dbReference type="InterPro" id="IPR000060">
    <property type="entry name" value="BCCT_transptr"/>
</dbReference>
<dbReference type="InterPro" id="IPR023449">
    <property type="entry name" value="BCCT_transptr_CaiT"/>
</dbReference>
<dbReference type="NCBIfam" id="TIGR00842">
    <property type="entry name" value="bcct"/>
    <property type="match status" value="1"/>
</dbReference>
<dbReference type="NCBIfam" id="NF002887">
    <property type="entry name" value="PRK03356.1"/>
    <property type="match status" value="1"/>
</dbReference>
<dbReference type="PANTHER" id="PTHR30047">
    <property type="entry name" value="HIGH-AFFINITY CHOLINE TRANSPORT PROTEIN-RELATED"/>
    <property type="match status" value="1"/>
</dbReference>
<dbReference type="PANTHER" id="PTHR30047:SF11">
    <property type="entry name" value="L-CARNITINE_GAMMA-BUTYROBETAINE ANTIPORTER"/>
    <property type="match status" value="1"/>
</dbReference>
<dbReference type="Pfam" id="PF02028">
    <property type="entry name" value="BCCT"/>
    <property type="match status" value="1"/>
</dbReference>
<dbReference type="PROSITE" id="PS01303">
    <property type="entry name" value="BCCT"/>
    <property type="match status" value="1"/>
</dbReference>
<proteinExistence type="inferred from homology"/>
<comment type="function">
    <text evidence="1">Catalyzes the exchange of L-carnitine for gamma-butyrobetaine.</text>
</comment>
<comment type="catalytic activity">
    <reaction evidence="1">
        <text>4-(trimethylamino)butanoate(in) + (R)-carnitine(out) = 4-(trimethylamino)butanoate(out) + (R)-carnitine(in)</text>
        <dbReference type="Rhea" id="RHEA:29427"/>
        <dbReference type="ChEBI" id="CHEBI:16244"/>
        <dbReference type="ChEBI" id="CHEBI:16347"/>
    </reaction>
</comment>
<comment type="pathway">
    <text evidence="1">Amine and polyamine metabolism; carnitine metabolism.</text>
</comment>
<comment type="subunit">
    <text evidence="1">Homotrimer.</text>
</comment>
<comment type="subcellular location">
    <subcellularLocation>
        <location evidence="1">Cell inner membrane</location>
        <topology evidence="1">Multi-pass membrane protein</topology>
    </subcellularLocation>
</comment>
<comment type="similarity">
    <text evidence="1">Belongs to the BCCT transporter (TC 2.A.15) family. CaiT subfamily.</text>
</comment>
<evidence type="ECO:0000255" key="1">
    <source>
        <dbReference type="HAMAP-Rule" id="MF_01049"/>
    </source>
</evidence>